<comment type="function">
    <text evidence="1 2">A P subtype restriction enzyme that recognizes the double-stranded sequence 5'-GGWCC-3' and cleaves after G-1 (PubMed:12654995, PubMed:7607523). This system is more active than isoschizomeric RM.HgiBI (PubMed:7607523).</text>
</comment>
<comment type="catalytic activity">
    <reaction evidence="1">
        <text>Endonucleolytic cleavage of DNA to give specific double-stranded fragments with terminal 5'-phosphates.</text>
        <dbReference type="EC" id="3.1.21.4"/>
    </reaction>
</comment>
<comment type="similarity">
    <text evidence="4">Belongs to the TdeIII type II restriction endonuclease family.</text>
</comment>
<dbReference type="EC" id="3.1.21.4" evidence="1"/>
<dbReference type="EMBL" id="X55142">
    <property type="protein sequence ID" value="CAA38945.1"/>
    <property type="molecule type" value="Genomic_DNA"/>
</dbReference>
<dbReference type="REBASE" id="1104">
    <property type="entry name" value="HgiEI"/>
</dbReference>
<dbReference type="BRENDA" id="3.1.21.4">
    <property type="organism ID" value="2656"/>
</dbReference>
<dbReference type="PRO" id="PR:P25260"/>
<dbReference type="GO" id="GO:0003677">
    <property type="term" value="F:DNA binding"/>
    <property type="evidence" value="ECO:0007669"/>
    <property type="project" value="InterPro"/>
</dbReference>
<dbReference type="GO" id="GO:0009036">
    <property type="term" value="F:type II site-specific deoxyribonuclease activity"/>
    <property type="evidence" value="ECO:0007669"/>
    <property type="project" value="UniProtKB-EC"/>
</dbReference>
<dbReference type="GO" id="GO:0009307">
    <property type="term" value="P:DNA restriction-modification system"/>
    <property type="evidence" value="ECO:0007669"/>
    <property type="project" value="UniProtKB-KW"/>
</dbReference>
<dbReference type="InterPro" id="IPR019045">
    <property type="entry name" value="Restrct_endonuc_II_TdeIII"/>
</dbReference>
<dbReference type="Pfam" id="PF09520">
    <property type="entry name" value="RE_TdeIII"/>
    <property type="match status" value="1"/>
</dbReference>
<organism>
    <name type="scientific">Herpetosiphon aurantiacus</name>
    <name type="common">Herpetosiphon giganteus</name>
    <dbReference type="NCBI Taxonomy" id="65"/>
    <lineage>
        <taxon>Bacteria</taxon>
        <taxon>Bacillati</taxon>
        <taxon>Chloroflexota</taxon>
        <taxon>Chloroflexia</taxon>
        <taxon>Herpetosiphonales</taxon>
        <taxon>Herpetosiphonaceae</taxon>
        <taxon>Herpetosiphon</taxon>
    </lineage>
</organism>
<feature type="chain" id="PRO_0000077314" description="Type II restriction enzyme HgiEI">
    <location>
        <begin position="1"/>
        <end position="274"/>
    </location>
</feature>
<feature type="mutagenesis site" description="Greatly decreased specific activity. Greatly increased specific activity; when associated with I-223." evidence="1">
    <original>N</original>
    <variation>S</variation>
    <location>
        <position position="176"/>
    </location>
</feature>
<feature type="mutagenesis site" description="Greatly increased specific activity; when associated with S-176." evidence="1">
    <original>N</original>
    <variation>I</variation>
    <location>
        <position position="223"/>
    </location>
</feature>
<name>T2E1_HERAU</name>
<keyword id="KW-0255">Endonuclease</keyword>
<keyword id="KW-0378">Hydrolase</keyword>
<keyword id="KW-0540">Nuclease</keyword>
<keyword id="KW-0680">Restriction system</keyword>
<evidence type="ECO:0000269" key="1">
    <source>
    </source>
</evidence>
<evidence type="ECO:0000303" key="2">
    <source>
    </source>
</evidence>
<evidence type="ECO:0000303" key="3">
    <source>
    </source>
</evidence>
<evidence type="ECO:0000305" key="4"/>
<accession>P25260</accession>
<proteinExistence type="evidence at protein level"/>
<reference key="1">
    <citation type="submission" date="1990-11" db="EMBL/GenBank/DDBJ databases">
        <authorList>
            <person name="Erdmann D."/>
            <person name="Kroeger M."/>
        </authorList>
    </citation>
    <scope>NUCLEOTIDE SEQUENCE [GENOMIC DNA]</scope>
    <source>
        <strain>HPG24</strain>
    </source>
</reference>
<reference key="2">
    <citation type="journal article" date="1995" name="Gene">
        <title>Organization and gene expression within restriction-modification systems of Herpetosiphon giganteus.</title>
        <authorList>
            <person name="Kroeger M."/>
            <person name="Blum E."/>
            <person name="Deppe E."/>
            <person name="Duesterhoeft A."/>
            <person name="Erdmann D."/>
            <person name="Kilz S."/>
            <person name="Meyer-Rogge S."/>
            <person name="Moestl D."/>
        </authorList>
    </citation>
    <scope>DISCUSSION OF SEQUENCE</scope>
    <scope>FUNCTION</scope>
    <scope>CATALYTIC ACTIVITY</scope>
    <scope>MUTAGENESIS OF ASN-176 AND ASN-223</scope>
</reference>
<reference key="3">
    <citation type="journal article" date="2003" name="Nucleic Acids Res.">
        <title>A nomenclature for restriction enzymes, DNA methyltransferases, homing endonucleases and their genes.</title>
        <authorList>
            <person name="Roberts R.J."/>
            <person name="Belfort M."/>
            <person name="Bestor T."/>
            <person name="Bhagwat A.S."/>
            <person name="Bickle T.A."/>
            <person name="Bitinaite J."/>
            <person name="Blumenthal R.M."/>
            <person name="Degtyarev S.K."/>
            <person name="Dryden D.T."/>
            <person name="Dybvig K."/>
            <person name="Firman K."/>
            <person name="Gromova E.S."/>
            <person name="Gumport R.I."/>
            <person name="Halford S.E."/>
            <person name="Hattman S."/>
            <person name="Heitman J."/>
            <person name="Hornby D.P."/>
            <person name="Janulaitis A."/>
            <person name="Jeltsch A."/>
            <person name="Josephsen J."/>
            <person name="Kiss A."/>
            <person name="Klaenhammer T.R."/>
            <person name="Kobayashi I."/>
            <person name="Kong H."/>
            <person name="Krueger D.H."/>
            <person name="Lacks S."/>
            <person name="Marinus M.G."/>
            <person name="Miyahara M."/>
            <person name="Morgan R.D."/>
            <person name="Murray N.E."/>
            <person name="Nagaraja V."/>
            <person name="Piekarowicz A."/>
            <person name="Pingoud A."/>
            <person name="Raleigh E."/>
            <person name="Rao D.N."/>
            <person name="Reich N."/>
            <person name="Repin V.E."/>
            <person name="Selker E.U."/>
            <person name="Shaw P.C."/>
            <person name="Stein D.C."/>
            <person name="Stoddard B.L."/>
            <person name="Szybalski W."/>
            <person name="Trautner T.A."/>
            <person name="Van Etten J.L."/>
            <person name="Vitor J.M."/>
            <person name="Wilson G.G."/>
            <person name="Xu S.Y."/>
        </authorList>
    </citation>
    <scope>NOMENCLATURE</scope>
    <scope>SUBTYPE</scope>
</reference>
<protein>
    <recommendedName>
        <fullName evidence="2">Type II restriction enzyme HgiEI</fullName>
        <shortName evidence="3">R.HgiEI</shortName>
        <ecNumber evidence="1">3.1.21.4</ecNumber>
    </recommendedName>
    <alternativeName>
        <fullName>Endonuclease HgiEI</fullName>
    </alternativeName>
    <alternativeName>
        <fullName>Type-2 restriction enzyme HgiEI</fullName>
    </alternativeName>
</protein>
<sequence>MAINPITRNKIKDYLNSFIQQQLSVYRERSLREFQDVDSYLPSLSKDGDLKPFHASLIPASIMRLNRFERSLSTGLGSTFEECTRLIALDHHAVALRNYDIQAALDQAQWAAIDQLISIIDRGLKHQTPSLNQMLEQIQSIPLTGILETHIVRADLYIQRHDGSELFFEIKSPKPNKGQCLEVMQRLLRIYTIKQQSAVPVKAFYAMAYNPWGISRASYRSSNTKKYTDFSNAVVIGQEFWSLIGEPSTYTELLEIYHEVGLAKSAEITQKLLQ</sequence>
<gene>
    <name evidence="3" type="primary">hgiEIR</name>
</gene>